<proteinExistence type="inferred from homology"/>
<organism>
    <name type="scientific">Olimarabidopsis pumila</name>
    <name type="common">Dwarf rocket</name>
    <name type="synonym">Arabidopsis griffithiana</name>
    <dbReference type="NCBI Taxonomy" id="74718"/>
    <lineage>
        <taxon>Eukaryota</taxon>
        <taxon>Viridiplantae</taxon>
        <taxon>Streptophyta</taxon>
        <taxon>Embryophyta</taxon>
        <taxon>Tracheophyta</taxon>
        <taxon>Spermatophyta</taxon>
        <taxon>Magnoliopsida</taxon>
        <taxon>eudicotyledons</taxon>
        <taxon>Gunneridae</taxon>
        <taxon>Pentapetalae</taxon>
        <taxon>rosids</taxon>
        <taxon>malvids</taxon>
        <taxon>Brassicales</taxon>
        <taxon>Brassicaceae</taxon>
        <taxon>Alyssopsideae</taxon>
        <taxon>Olimarabidopsis</taxon>
    </lineage>
</organism>
<geneLocation type="chloroplast"/>
<evidence type="ECO:0000255" key="1">
    <source>
        <dbReference type="HAMAP-Rule" id="MF_01396"/>
    </source>
</evidence>
<keyword id="KW-0066">ATP synthesis</keyword>
<keyword id="KW-0138">CF(0)</keyword>
<keyword id="KW-0150">Chloroplast</keyword>
<keyword id="KW-0375">Hydrogen ion transport</keyword>
<keyword id="KW-0406">Ion transport</keyword>
<keyword id="KW-0446">Lipid-binding</keyword>
<keyword id="KW-0472">Membrane</keyword>
<keyword id="KW-0934">Plastid</keyword>
<keyword id="KW-0793">Thylakoid</keyword>
<keyword id="KW-0812">Transmembrane</keyword>
<keyword id="KW-1133">Transmembrane helix</keyword>
<keyword id="KW-0813">Transport</keyword>
<reference key="1">
    <citation type="submission" date="2007-03" db="EMBL/GenBank/DDBJ databases">
        <title>Sequence analysis of Arabidopsis pumila JS2 chloroplast DNA.</title>
        <authorList>
            <person name="Hosouchi T."/>
            <person name="Tsuruoka H."/>
            <person name="Kotani H."/>
        </authorList>
    </citation>
    <scope>NUCLEOTIDE SEQUENCE [LARGE SCALE GENOMIC DNA]</scope>
</reference>
<comment type="function">
    <text evidence="1">F(1)F(0) ATP synthase produces ATP from ADP in the presence of a proton or sodium gradient. F-type ATPases consist of two structural domains, F(1) containing the extramembraneous catalytic core and F(0) containing the membrane proton channel, linked together by a central stalk and a peripheral stalk. During catalysis, ATP synthesis in the catalytic domain of F(1) is coupled via a rotary mechanism of the central stalk subunits to proton translocation.</text>
</comment>
<comment type="function">
    <text evidence="1">Key component of the F(0) channel; it plays a direct role in translocation across the membrane. A homomeric c-ring of between 10-14 subunits forms the central stalk rotor element with the F(1) delta and epsilon subunits.</text>
</comment>
<comment type="subunit">
    <text evidence="1">F-type ATPases have 2 components, F(1) - the catalytic core - and F(0) - the membrane proton channel. F(1) has five subunits: alpha(3), beta(3), gamma(1), delta(1), epsilon(1). F(0) has four main subunits: a(1), b(1), b'(1) and c(10-14). The alpha and beta chains form an alternating ring which encloses part of the gamma chain. F(1) is attached to F(0) by a central stalk formed by the gamma and epsilon chains, while a peripheral stalk is formed by the delta, b and b' chains.</text>
</comment>
<comment type="subcellular location">
    <subcellularLocation>
        <location evidence="1">Plastid</location>
        <location evidence="1">Chloroplast thylakoid membrane</location>
        <topology evidence="1">Multi-pass membrane protein</topology>
    </subcellularLocation>
</comment>
<comment type="miscellaneous">
    <text>In plastids the F-type ATPase is also known as CF(1)CF(0).</text>
</comment>
<comment type="similarity">
    <text evidence="1">Belongs to the ATPase C chain family.</text>
</comment>
<dbReference type="EMBL" id="AP009368">
    <property type="protein sequence ID" value="BAF49926.1"/>
    <property type="molecule type" value="Genomic_DNA"/>
</dbReference>
<dbReference type="RefSeq" id="YP_001123102.1">
    <property type="nucleotide sequence ID" value="NC_009267.1"/>
</dbReference>
<dbReference type="SMR" id="A4QJS0"/>
<dbReference type="GeneID" id="4962428"/>
<dbReference type="GO" id="GO:0009535">
    <property type="term" value="C:chloroplast thylakoid membrane"/>
    <property type="evidence" value="ECO:0007669"/>
    <property type="project" value="UniProtKB-SubCell"/>
</dbReference>
<dbReference type="GO" id="GO:0045259">
    <property type="term" value="C:proton-transporting ATP synthase complex"/>
    <property type="evidence" value="ECO:0007669"/>
    <property type="project" value="UniProtKB-KW"/>
</dbReference>
<dbReference type="GO" id="GO:0033177">
    <property type="term" value="C:proton-transporting two-sector ATPase complex, proton-transporting domain"/>
    <property type="evidence" value="ECO:0007669"/>
    <property type="project" value="InterPro"/>
</dbReference>
<dbReference type="GO" id="GO:0008289">
    <property type="term" value="F:lipid binding"/>
    <property type="evidence" value="ECO:0007669"/>
    <property type="project" value="UniProtKB-KW"/>
</dbReference>
<dbReference type="GO" id="GO:0046933">
    <property type="term" value="F:proton-transporting ATP synthase activity, rotational mechanism"/>
    <property type="evidence" value="ECO:0007669"/>
    <property type="project" value="UniProtKB-UniRule"/>
</dbReference>
<dbReference type="CDD" id="cd18183">
    <property type="entry name" value="ATP-synt_Fo_c_ATPH"/>
    <property type="match status" value="1"/>
</dbReference>
<dbReference type="FunFam" id="1.20.20.10:FF:000001">
    <property type="entry name" value="ATP synthase subunit c, chloroplastic"/>
    <property type="match status" value="1"/>
</dbReference>
<dbReference type="Gene3D" id="1.20.20.10">
    <property type="entry name" value="F1F0 ATP synthase subunit C"/>
    <property type="match status" value="1"/>
</dbReference>
<dbReference type="HAMAP" id="MF_01396">
    <property type="entry name" value="ATP_synth_c_bact"/>
    <property type="match status" value="1"/>
</dbReference>
<dbReference type="InterPro" id="IPR005953">
    <property type="entry name" value="ATP_synth_csu_bac/chlpt"/>
</dbReference>
<dbReference type="InterPro" id="IPR000454">
    <property type="entry name" value="ATP_synth_F0_csu"/>
</dbReference>
<dbReference type="InterPro" id="IPR020537">
    <property type="entry name" value="ATP_synth_F0_csu_DDCD_BS"/>
</dbReference>
<dbReference type="InterPro" id="IPR038662">
    <property type="entry name" value="ATP_synth_F0_csu_sf"/>
</dbReference>
<dbReference type="InterPro" id="IPR002379">
    <property type="entry name" value="ATPase_proteolipid_c-like_dom"/>
</dbReference>
<dbReference type="InterPro" id="IPR035921">
    <property type="entry name" value="F/V-ATP_Csub_sf"/>
</dbReference>
<dbReference type="NCBIfam" id="TIGR01260">
    <property type="entry name" value="ATP_synt_c"/>
    <property type="match status" value="1"/>
</dbReference>
<dbReference type="NCBIfam" id="NF005608">
    <property type="entry name" value="PRK07354.1"/>
    <property type="match status" value="1"/>
</dbReference>
<dbReference type="PANTHER" id="PTHR10031">
    <property type="entry name" value="ATP SYNTHASE LIPID-BINDING PROTEIN, MITOCHONDRIAL"/>
    <property type="match status" value="1"/>
</dbReference>
<dbReference type="PANTHER" id="PTHR10031:SF0">
    <property type="entry name" value="ATPASE PROTEIN 9"/>
    <property type="match status" value="1"/>
</dbReference>
<dbReference type="Pfam" id="PF00137">
    <property type="entry name" value="ATP-synt_C"/>
    <property type="match status" value="1"/>
</dbReference>
<dbReference type="PRINTS" id="PR00124">
    <property type="entry name" value="ATPASEC"/>
</dbReference>
<dbReference type="SUPFAM" id="SSF81333">
    <property type="entry name" value="F1F0 ATP synthase subunit C"/>
    <property type="match status" value="1"/>
</dbReference>
<dbReference type="PROSITE" id="PS00605">
    <property type="entry name" value="ATPASE_C"/>
    <property type="match status" value="1"/>
</dbReference>
<feature type="chain" id="PRO_0000362947" description="ATP synthase subunit c, chloroplastic">
    <location>
        <begin position="1"/>
        <end position="81"/>
    </location>
</feature>
<feature type="transmembrane region" description="Helical" evidence="1">
    <location>
        <begin position="7"/>
        <end position="27"/>
    </location>
</feature>
<feature type="transmembrane region" description="Helical" evidence="1">
    <location>
        <begin position="57"/>
        <end position="77"/>
    </location>
</feature>
<feature type="site" description="Reversibly protonated during proton transport" evidence="1">
    <location>
        <position position="61"/>
    </location>
</feature>
<gene>
    <name evidence="1" type="primary">atpH</name>
</gene>
<protein>
    <recommendedName>
        <fullName evidence="1">ATP synthase subunit c, chloroplastic</fullName>
    </recommendedName>
    <alternativeName>
        <fullName evidence="1">ATP synthase F(0) sector subunit c</fullName>
    </alternativeName>
    <alternativeName>
        <fullName evidence="1">ATPase subunit III</fullName>
    </alternativeName>
    <alternativeName>
        <fullName evidence="1">F-type ATPase subunit c</fullName>
        <shortName evidence="1">F-ATPase subunit c</shortName>
    </alternativeName>
    <alternativeName>
        <fullName evidence="1">Lipid-binding protein</fullName>
    </alternativeName>
</protein>
<sequence length="81" mass="7976">MNPLVSAASVIAAGLAVGLASIGPGVGQGTAAGQAVEGIARQPEAEGKIRGTLLLSLAFMEALTIYGLVVALALLFANPFV</sequence>
<name>ATPH_OLIPU</name>
<accession>A4QJS0</accession>